<name>Y5279_BACC1</name>
<reference key="1">
    <citation type="journal article" date="2004" name="Nucleic Acids Res.">
        <title>The genome sequence of Bacillus cereus ATCC 10987 reveals metabolic adaptations and a large plasmid related to Bacillus anthracis pXO1.</title>
        <authorList>
            <person name="Rasko D.A."/>
            <person name="Ravel J."/>
            <person name="Oekstad O.A."/>
            <person name="Helgason E."/>
            <person name="Cer R.Z."/>
            <person name="Jiang L."/>
            <person name="Shores K.A."/>
            <person name="Fouts D.E."/>
            <person name="Tourasse N.J."/>
            <person name="Angiuoli S.V."/>
            <person name="Kolonay J.F."/>
            <person name="Nelson W.C."/>
            <person name="Kolstoe A.-B."/>
            <person name="Fraser C.M."/>
            <person name="Read T.D."/>
        </authorList>
    </citation>
    <scope>NUCLEOTIDE SEQUENCE [LARGE SCALE GENOMIC DNA]</scope>
    <source>
        <strain>ATCC 10987 / NRS 248</strain>
    </source>
</reference>
<sequence length="352" mass="37426">MHVPIRLLEWFKVEQTLVIQKKKRFGFSQGIGITLLIAIVAKYLAELPFLNIMGQLVIAILIGMVWRAAIGVPHDAIAGTNFASKKLLRFGIILLGMRLNLVDIAKAGPKVLVIAAVVITFTIFVVYGLTKVFKVEKKLGILTACGTAICGAAAVVAIAPQVKAKDDETAVGAAIIAILGTIFTLIYTLLYPVLGLSPYGYGVFSGATLHEIAHVIAAAAPGGSAAVDIAVIVKLTRVAMLVPVAILIGLWFGKSEGSKEKRSWRDLPIPWFIFGFLAMSAVHSLGIIPEVVAGYIVVIAYMLIAMAMAGLGLNVEFKTFRKLGSKAFVAGLIGSVCLSVLGYVLVYALGFM</sequence>
<gene>
    <name type="ordered locus">BCE_5279</name>
</gene>
<evidence type="ECO:0000255" key="1"/>
<evidence type="ECO:0000305" key="2"/>
<accession>Q72XU4</accession>
<protein>
    <recommendedName>
        <fullName>UPF0324 membrane protein BCE_5279</fullName>
    </recommendedName>
</protein>
<dbReference type="EMBL" id="AE017194">
    <property type="protein sequence ID" value="AAS44180.1"/>
    <property type="molecule type" value="Genomic_DNA"/>
</dbReference>
<dbReference type="KEGG" id="bca:BCE_5279"/>
<dbReference type="HOGENOM" id="CLU_033541_0_1_9"/>
<dbReference type="Proteomes" id="UP000002527">
    <property type="component" value="Chromosome"/>
</dbReference>
<dbReference type="GO" id="GO:0005886">
    <property type="term" value="C:plasma membrane"/>
    <property type="evidence" value="ECO:0007669"/>
    <property type="project" value="UniProtKB-SubCell"/>
</dbReference>
<dbReference type="InterPro" id="IPR018383">
    <property type="entry name" value="UPF0324_pro"/>
</dbReference>
<dbReference type="PANTHER" id="PTHR30106">
    <property type="entry name" value="INNER MEMBRANE PROTEIN YEIH-RELATED"/>
    <property type="match status" value="1"/>
</dbReference>
<dbReference type="PANTHER" id="PTHR30106:SF2">
    <property type="entry name" value="UPF0324 INNER MEMBRANE PROTEIN YEIH"/>
    <property type="match status" value="1"/>
</dbReference>
<dbReference type="Pfam" id="PF03601">
    <property type="entry name" value="Cons_hypoth698"/>
    <property type="match status" value="1"/>
</dbReference>
<comment type="subcellular location">
    <subcellularLocation>
        <location evidence="2">Cell membrane</location>
        <topology evidence="2">Multi-pass membrane protein</topology>
    </subcellularLocation>
</comment>
<comment type="similarity">
    <text evidence="2">Belongs to the UPF0324 family.</text>
</comment>
<organism>
    <name type="scientific">Bacillus cereus (strain ATCC 10987 / NRS 248)</name>
    <dbReference type="NCBI Taxonomy" id="222523"/>
    <lineage>
        <taxon>Bacteria</taxon>
        <taxon>Bacillati</taxon>
        <taxon>Bacillota</taxon>
        <taxon>Bacilli</taxon>
        <taxon>Bacillales</taxon>
        <taxon>Bacillaceae</taxon>
        <taxon>Bacillus</taxon>
        <taxon>Bacillus cereus group</taxon>
    </lineage>
</organism>
<keyword id="KW-1003">Cell membrane</keyword>
<keyword id="KW-0472">Membrane</keyword>
<keyword id="KW-0812">Transmembrane</keyword>
<keyword id="KW-1133">Transmembrane helix</keyword>
<feature type="chain" id="PRO_0000157390" description="UPF0324 membrane protein BCE_5279">
    <location>
        <begin position="1"/>
        <end position="352"/>
    </location>
</feature>
<feature type="transmembrane region" description="Helical" evidence="1">
    <location>
        <begin position="25"/>
        <end position="47"/>
    </location>
</feature>
<feature type="transmembrane region" description="Helical" evidence="1">
    <location>
        <begin position="52"/>
        <end position="71"/>
    </location>
</feature>
<feature type="transmembrane region" description="Helical" evidence="1">
    <location>
        <begin position="111"/>
        <end position="130"/>
    </location>
</feature>
<feature type="transmembrane region" description="Helical" evidence="1">
    <location>
        <begin position="140"/>
        <end position="162"/>
    </location>
</feature>
<feature type="transmembrane region" description="Helical" evidence="1">
    <location>
        <begin position="169"/>
        <end position="191"/>
    </location>
</feature>
<feature type="transmembrane region" description="Helical" evidence="1">
    <location>
        <begin position="201"/>
        <end position="223"/>
    </location>
</feature>
<feature type="transmembrane region" description="Helical" evidence="1">
    <location>
        <begin position="230"/>
        <end position="252"/>
    </location>
</feature>
<feature type="transmembrane region" description="Helical" evidence="1">
    <location>
        <begin position="267"/>
        <end position="289"/>
    </location>
</feature>
<feature type="transmembrane region" description="Helical" evidence="1">
    <location>
        <begin position="291"/>
        <end position="313"/>
    </location>
</feature>
<feature type="transmembrane region" description="Helical" evidence="1">
    <location>
        <begin position="328"/>
        <end position="350"/>
    </location>
</feature>
<proteinExistence type="inferred from homology"/>